<dbReference type="EC" id="2.1.1.144" evidence="1"/>
<dbReference type="EMBL" id="CP000946">
    <property type="protein sequence ID" value="ACA77779.1"/>
    <property type="molecule type" value="Genomic_DNA"/>
</dbReference>
<dbReference type="RefSeq" id="WP_001286597.1">
    <property type="nucleotide sequence ID" value="NZ_MTFT01000006.1"/>
</dbReference>
<dbReference type="SMR" id="B1IRU1"/>
<dbReference type="KEGG" id="ecl:EcolC_2139"/>
<dbReference type="HOGENOM" id="CLU_037990_5_2_6"/>
<dbReference type="GO" id="GO:0005737">
    <property type="term" value="C:cytoplasm"/>
    <property type="evidence" value="ECO:0007669"/>
    <property type="project" value="UniProtKB-SubCell"/>
</dbReference>
<dbReference type="GO" id="GO:0030798">
    <property type="term" value="F:trans-aconitate 2-methyltransferase activity"/>
    <property type="evidence" value="ECO:0007669"/>
    <property type="project" value="UniProtKB-UniRule"/>
</dbReference>
<dbReference type="GO" id="GO:0032259">
    <property type="term" value="P:methylation"/>
    <property type="evidence" value="ECO:0007669"/>
    <property type="project" value="UniProtKB-KW"/>
</dbReference>
<dbReference type="CDD" id="cd02440">
    <property type="entry name" value="AdoMet_MTases"/>
    <property type="match status" value="1"/>
</dbReference>
<dbReference type="Gene3D" id="1.10.150.290">
    <property type="entry name" value="S-adenosyl-L-methionine-dependent methyltransferases"/>
    <property type="match status" value="1"/>
</dbReference>
<dbReference type="Gene3D" id="3.40.50.150">
    <property type="entry name" value="Vaccinia Virus protein VP39"/>
    <property type="match status" value="1"/>
</dbReference>
<dbReference type="HAMAP" id="MF_00560">
    <property type="entry name" value="Tran_acon_Me_trans"/>
    <property type="match status" value="1"/>
</dbReference>
<dbReference type="InterPro" id="IPR041698">
    <property type="entry name" value="Methyltransf_25"/>
</dbReference>
<dbReference type="InterPro" id="IPR029063">
    <property type="entry name" value="SAM-dependent_MTases_sf"/>
</dbReference>
<dbReference type="InterPro" id="IPR023506">
    <property type="entry name" value="Trans-aconitate_MeTrfase"/>
</dbReference>
<dbReference type="InterPro" id="IPR023149">
    <property type="entry name" value="Trans_acon_MeTrfase_C"/>
</dbReference>
<dbReference type="NCBIfam" id="NF002463">
    <property type="entry name" value="PRK01683.1"/>
    <property type="match status" value="1"/>
</dbReference>
<dbReference type="PANTHER" id="PTHR43861:SF1">
    <property type="entry name" value="TRANS-ACONITATE 2-METHYLTRANSFERASE"/>
    <property type="match status" value="1"/>
</dbReference>
<dbReference type="PANTHER" id="PTHR43861">
    <property type="entry name" value="TRANS-ACONITATE 2-METHYLTRANSFERASE-RELATED"/>
    <property type="match status" value="1"/>
</dbReference>
<dbReference type="Pfam" id="PF13649">
    <property type="entry name" value="Methyltransf_25"/>
    <property type="match status" value="1"/>
</dbReference>
<dbReference type="SUPFAM" id="SSF53335">
    <property type="entry name" value="S-adenosyl-L-methionine-dependent methyltransferases"/>
    <property type="match status" value="1"/>
</dbReference>
<accession>B1IRU1</accession>
<name>TAM_ECOLC</name>
<evidence type="ECO:0000255" key="1">
    <source>
        <dbReference type="HAMAP-Rule" id="MF_00560"/>
    </source>
</evidence>
<gene>
    <name evidence="1" type="primary">tam</name>
    <name type="ordered locus">EcolC_2139</name>
</gene>
<keyword id="KW-0963">Cytoplasm</keyword>
<keyword id="KW-0489">Methyltransferase</keyword>
<keyword id="KW-0949">S-adenosyl-L-methionine</keyword>
<keyword id="KW-0808">Transferase</keyword>
<proteinExistence type="inferred from homology"/>
<reference key="1">
    <citation type="submission" date="2008-02" db="EMBL/GenBank/DDBJ databases">
        <title>Complete sequence of Escherichia coli C str. ATCC 8739.</title>
        <authorList>
            <person name="Copeland A."/>
            <person name="Lucas S."/>
            <person name="Lapidus A."/>
            <person name="Glavina del Rio T."/>
            <person name="Dalin E."/>
            <person name="Tice H."/>
            <person name="Bruce D."/>
            <person name="Goodwin L."/>
            <person name="Pitluck S."/>
            <person name="Kiss H."/>
            <person name="Brettin T."/>
            <person name="Detter J.C."/>
            <person name="Han C."/>
            <person name="Kuske C.R."/>
            <person name="Schmutz J."/>
            <person name="Larimer F."/>
            <person name="Land M."/>
            <person name="Hauser L."/>
            <person name="Kyrpides N."/>
            <person name="Mikhailova N."/>
            <person name="Ingram L."/>
            <person name="Richardson P."/>
        </authorList>
    </citation>
    <scope>NUCLEOTIDE SEQUENCE [LARGE SCALE GENOMIC DNA]</scope>
    <source>
        <strain>ATCC 8739 / DSM 1576 / NBRC 3972 / NCIMB 8545 / WDCM 00012 / Crooks</strain>
    </source>
</reference>
<sequence>MSDWNPSLYLHFSAERSRPAVELLARVPLENVEYVADLGCGPGNSTALLQQRWPAARITGIDSSPAMIAEARSALPDCQFVEADIRNWQPVQALDLIFANASLQWLPDHYELFPHLVSLLNPQGVLAVQMPDNWLEPTHVLMREVAWEQNYPDRGREPLAGVHAYYDILSEAGCEVDIWRTTYYHQMPSHQAIIDWVTATGLRPWLQDLTESEQQLFLKRYHQMLEEQYPLQENGQILLAFPRLFIVARRME</sequence>
<comment type="function">
    <text evidence="1">Catalyzes the S-adenosylmethionine monomethyl esterification of trans-aconitate.</text>
</comment>
<comment type="catalytic activity">
    <reaction evidence="1">
        <text>trans-aconitate + S-adenosyl-L-methionine = (E)-3-(methoxycarbonyl)pent-2-enedioate + S-adenosyl-L-homocysteine</text>
        <dbReference type="Rhea" id="RHEA:14969"/>
        <dbReference type="ChEBI" id="CHEBI:15708"/>
        <dbReference type="ChEBI" id="CHEBI:57470"/>
        <dbReference type="ChEBI" id="CHEBI:57856"/>
        <dbReference type="ChEBI" id="CHEBI:59789"/>
        <dbReference type="EC" id="2.1.1.144"/>
    </reaction>
</comment>
<comment type="subcellular location">
    <subcellularLocation>
        <location evidence="1">Cytoplasm</location>
    </subcellularLocation>
</comment>
<comment type="similarity">
    <text evidence="1">Belongs to the methyltransferase superfamily. Tam family.</text>
</comment>
<organism>
    <name type="scientific">Escherichia coli (strain ATCC 8739 / DSM 1576 / NBRC 3972 / NCIMB 8545 / WDCM 00012 / Crooks)</name>
    <dbReference type="NCBI Taxonomy" id="481805"/>
    <lineage>
        <taxon>Bacteria</taxon>
        <taxon>Pseudomonadati</taxon>
        <taxon>Pseudomonadota</taxon>
        <taxon>Gammaproteobacteria</taxon>
        <taxon>Enterobacterales</taxon>
        <taxon>Enterobacteriaceae</taxon>
        <taxon>Escherichia</taxon>
    </lineage>
</organism>
<feature type="chain" id="PRO_1000082273" description="Trans-aconitate 2-methyltransferase">
    <location>
        <begin position="1"/>
        <end position="252"/>
    </location>
</feature>
<protein>
    <recommendedName>
        <fullName evidence="1">Trans-aconitate 2-methyltransferase</fullName>
        <ecNumber evidence="1">2.1.1.144</ecNumber>
    </recommendedName>
</protein>